<sequence length="147" mass="16250">MKIVIQRVKRAQVSIDQQLRSSIGQGLLLLVGVGPDDSQEDMDYAVRKIVNMRIFSDAEGKMNLSIKDIDGEILSISQFTLHADTKKGNRPAFVKAAPPEMASNFYDAFNLALQQEVPTRTGIFGADMQVELVNDGPVTIILDTKNR</sequence>
<feature type="chain" id="PRO_1000050896" description="D-aminoacyl-tRNA deacylase">
    <location>
        <begin position="1"/>
        <end position="147"/>
    </location>
</feature>
<feature type="short sequence motif" description="Gly-cisPro motif, important for rejection of L-amino acids" evidence="1">
    <location>
        <begin position="136"/>
        <end position="137"/>
    </location>
</feature>
<name>DTD_STRSV</name>
<gene>
    <name evidence="1" type="primary">dtd</name>
    <name type="ordered locus">SSA_0251</name>
</gene>
<reference key="1">
    <citation type="journal article" date="2007" name="J. Bacteriol.">
        <title>Genome of the opportunistic pathogen Streptococcus sanguinis.</title>
        <authorList>
            <person name="Xu P."/>
            <person name="Alves J.M."/>
            <person name="Kitten T."/>
            <person name="Brown A."/>
            <person name="Chen Z."/>
            <person name="Ozaki L.S."/>
            <person name="Manque P."/>
            <person name="Ge X."/>
            <person name="Serrano M.G."/>
            <person name="Puiu D."/>
            <person name="Hendricks S."/>
            <person name="Wang Y."/>
            <person name="Chaplin M.D."/>
            <person name="Akan D."/>
            <person name="Paik S."/>
            <person name="Peterson D.L."/>
            <person name="Macrina F.L."/>
            <person name="Buck G.A."/>
        </authorList>
    </citation>
    <scope>NUCLEOTIDE SEQUENCE [LARGE SCALE GENOMIC DNA]</scope>
    <source>
        <strain>SK36</strain>
    </source>
</reference>
<proteinExistence type="inferred from homology"/>
<comment type="function">
    <text evidence="1">An aminoacyl-tRNA editing enzyme that deacylates mischarged D-aminoacyl-tRNAs. Also deacylates mischarged glycyl-tRNA(Ala), protecting cells against glycine mischarging by AlaRS. Acts via tRNA-based rather than protein-based catalysis; rejects L-amino acids rather than detecting D-amino acids in the active site. By recycling D-aminoacyl-tRNA to D-amino acids and free tRNA molecules, this enzyme counteracts the toxicity associated with the formation of D-aminoacyl-tRNA entities in vivo and helps enforce protein L-homochirality.</text>
</comment>
<comment type="catalytic activity">
    <reaction evidence="1">
        <text>glycyl-tRNA(Ala) + H2O = tRNA(Ala) + glycine + H(+)</text>
        <dbReference type="Rhea" id="RHEA:53744"/>
        <dbReference type="Rhea" id="RHEA-COMP:9657"/>
        <dbReference type="Rhea" id="RHEA-COMP:13640"/>
        <dbReference type="ChEBI" id="CHEBI:15377"/>
        <dbReference type="ChEBI" id="CHEBI:15378"/>
        <dbReference type="ChEBI" id="CHEBI:57305"/>
        <dbReference type="ChEBI" id="CHEBI:78442"/>
        <dbReference type="ChEBI" id="CHEBI:78522"/>
        <dbReference type="EC" id="3.1.1.96"/>
    </reaction>
</comment>
<comment type="catalytic activity">
    <reaction evidence="1">
        <text>a D-aminoacyl-tRNA + H2O = a tRNA + a D-alpha-amino acid + H(+)</text>
        <dbReference type="Rhea" id="RHEA:13953"/>
        <dbReference type="Rhea" id="RHEA-COMP:10123"/>
        <dbReference type="Rhea" id="RHEA-COMP:10124"/>
        <dbReference type="ChEBI" id="CHEBI:15377"/>
        <dbReference type="ChEBI" id="CHEBI:15378"/>
        <dbReference type="ChEBI" id="CHEBI:59871"/>
        <dbReference type="ChEBI" id="CHEBI:78442"/>
        <dbReference type="ChEBI" id="CHEBI:79333"/>
        <dbReference type="EC" id="3.1.1.96"/>
    </reaction>
</comment>
<comment type="subunit">
    <text evidence="1">Homodimer.</text>
</comment>
<comment type="subcellular location">
    <subcellularLocation>
        <location evidence="1">Cytoplasm</location>
    </subcellularLocation>
</comment>
<comment type="domain">
    <text evidence="1">A Gly-cisPro motif from one monomer fits into the active site of the other monomer to allow specific chiral rejection of L-amino acids.</text>
</comment>
<comment type="similarity">
    <text evidence="1">Belongs to the DTD family.</text>
</comment>
<accession>A3CKK5</accession>
<organism>
    <name type="scientific">Streptococcus sanguinis (strain SK36)</name>
    <dbReference type="NCBI Taxonomy" id="388919"/>
    <lineage>
        <taxon>Bacteria</taxon>
        <taxon>Bacillati</taxon>
        <taxon>Bacillota</taxon>
        <taxon>Bacilli</taxon>
        <taxon>Lactobacillales</taxon>
        <taxon>Streptococcaceae</taxon>
        <taxon>Streptococcus</taxon>
    </lineage>
</organism>
<evidence type="ECO:0000255" key="1">
    <source>
        <dbReference type="HAMAP-Rule" id="MF_00518"/>
    </source>
</evidence>
<keyword id="KW-0963">Cytoplasm</keyword>
<keyword id="KW-0378">Hydrolase</keyword>
<keyword id="KW-1185">Reference proteome</keyword>
<keyword id="KW-0694">RNA-binding</keyword>
<keyword id="KW-0820">tRNA-binding</keyword>
<protein>
    <recommendedName>
        <fullName evidence="1">D-aminoacyl-tRNA deacylase</fullName>
        <shortName evidence="1">DTD</shortName>
        <ecNumber evidence="1">3.1.1.96</ecNumber>
    </recommendedName>
    <alternativeName>
        <fullName evidence="1">Gly-tRNA(Ala) deacylase</fullName>
    </alternativeName>
</protein>
<dbReference type="EC" id="3.1.1.96" evidence="1"/>
<dbReference type="EMBL" id="CP000387">
    <property type="protein sequence ID" value="ABN43710.1"/>
    <property type="molecule type" value="Genomic_DNA"/>
</dbReference>
<dbReference type="RefSeq" id="WP_002910787.1">
    <property type="nucleotide sequence ID" value="NC_009009.1"/>
</dbReference>
<dbReference type="RefSeq" id="YP_001034260.1">
    <property type="nucleotide sequence ID" value="NC_009009.1"/>
</dbReference>
<dbReference type="SMR" id="A3CKK5"/>
<dbReference type="KEGG" id="ssa:SSA_0251"/>
<dbReference type="PATRIC" id="fig|388919.9.peg.243"/>
<dbReference type="eggNOG" id="COG1490">
    <property type="taxonomic scope" value="Bacteria"/>
</dbReference>
<dbReference type="HOGENOM" id="CLU_076901_1_0_9"/>
<dbReference type="OrthoDB" id="9801395at2"/>
<dbReference type="Proteomes" id="UP000002148">
    <property type="component" value="Chromosome"/>
</dbReference>
<dbReference type="GO" id="GO:0005737">
    <property type="term" value="C:cytoplasm"/>
    <property type="evidence" value="ECO:0007669"/>
    <property type="project" value="UniProtKB-SubCell"/>
</dbReference>
<dbReference type="GO" id="GO:0051500">
    <property type="term" value="F:D-tyrosyl-tRNA(Tyr) deacylase activity"/>
    <property type="evidence" value="ECO:0007669"/>
    <property type="project" value="TreeGrafter"/>
</dbReference>
<dbReference type="GO" id="GO:0106026">
    <property type="term" value="F:Gly-tRNA(Ala) deacylase activity"/>
    <property type="evidence" value="ECO:0007669"/>
    <property type="project" value="UniProtKB-UniRule"/>
</dbReference>
<dbReference type="GO" id="GO:0043908">
    <property type="term" value="F:Ser(Gly)-tRNA(Ala) hydrolase activity"/>
    <property type="evidence" value="ECO:0007669"/>
    <property type="project" value="UniProtKB-UniRule"/>
</dbReference>
<dbReference type="GO" id="GO:0000049">
    <property type="term" value="F:tRNA binding"/>
    <property type="evidence" value="ECO:0007669"/>
    <property type="project" value="UniProtKB-UniRule"/>
</dbReference>
<dbReference type="GO" id="GO:0019478">
    <property type="term" value="P:D-amino acid catabolic process"/>
    <property type="evidence" value="ECO:0007669"/>
    <property type="project" value="UniProtKB-UniRule"/>
</dbReference>
<dbReference type="CDD" id="cd00563">
    <property type="entry name" value="Dtyr_deacylase"/>
    <property type="match status" value="1"/>
</dbReference>
<dbReference type="FunFam" id="3.50.80.10:FF:000001">
    <property type="entry name" value="D-aminoacyl-tRNA deacylase"/>
    <property type="match status" value="1"/>
</dbReference>
<dbReference type="Gene3D" id="3.50.80.10">
    <property type="entry name" value="D-tyrosyl-tRNA(Tyr) deacylase"/>
    <property type="match status" value="1"/>
</dbReference>
<dbReference type="HAMAP" id="MF_00518">
    <property type="entry name" value="Deacylase_Dtd"/>
    <property type="match status" value="1"/>
</dbReference>
<dbReference type="InterPro" id="IPR003732">
    <property type="entry name" value="Daa-tRNA_deacyls_DTD"/>
</dbReference>
<dbReference type="InterPro" id="IPR023509">
    <property type="entry name" value="DTD-like_sf"/>
</dbReference>
<dbReference type="NCBIfam" id="TIGR00256">
    <property type="entry name" value="D-aminoacyl-tRNA deacylase"/>
    <property type="match status" value="1"/>
</dbReference>
<dbReference type="PANTHER" id="PTHR10472:SF5">
    <property type="entry name" value="D-AMINOACYL-TRNA DEACYLASE 1"/>
    <property type="match status" value="1"/>
</dbReference>
<dbReference type="PANTHER" id="PTHR10472">
    <property type="entry name" value="D-TYROSYL-TRNA TYR DEACYLASE"/>
    <property type="match status" value="1"/>
</dbReference>
<dbReference type="Pfam" id="PF02580">
    <property type="entry name" value="Tyr_Deacylase"/>
    <property type="match status" value="1"/>
</dbReference>
<dbReference type="SUPFAM" id="SSF69500">
    <property type="entry name" value="DTD-like"/>
    <property type="match status" value="1"/>
</dbReference>